<evidence type="ECO:0000250" key="1"/>
<evidence type="ECO:0000255" key="2"/>
<evidence type="ECO:0000305" key="3"/>
<keyword id="KW-0244">Early protein</keyword>
<keyword id="KW-1032">Host cell membrane</keyword>
<keyword id="KW-1043">Host membrane</keyword>
<keyword id="KW-0472">Membrane</keyword>
<keyword id="KW-0812">Transmembrane</keyword>
<keyword id="KW-1133">Transmembrane helix</keyword>
<keyword id="KW-0946">Virion</keyword>
<protein>
    <recommendedName>
        <fullName>Envelope protein 169</fullName>
    </recommendedName>
</protein>
<proteinExistence type="evidence at transcript level"/>
<reference key="1">
    <citation type="submission" date="2003-03" db="EMBL/GenBank/DDBJ databases">
        <title>African swine fever virus genomes.</title>
        <authorList>
            <person name="Kutish G.F."/>
            <person name="Rock D.L."/>
        </authorList>
    </citation>
    <scope>NUCLEOTIDE SEQUENCE [LARGE SCALE GENOMIC DNA]</scope>
</reference>
<feature type="chain" id="PRO_0000373374" description="Envelope protein 169">
    <location>
        <begin position="1"/>
        <end position="184"/>
    </location>
</feature>
<feature type="topological domain" description="Intravirion" evidence="2">
    <location>
        <begin position="1"/>
        <end position="6"/>
    </location>
</feature>
<feature type="transmembrane region" description="Helical" evidence="2">
    <location>
        <begin position="7"/>
        <end position="27"/>
    </location>
</feature>
<feature type="topological domain" description="Virion surface" evidence="2">
    <location>
        <begin position="28"/>
        <end position="184"/>
    </location>
</feature>
<dbReference type="EMBL" id="AY261363">
    <property type="status" value="NOT_ANNOTATED_CDS"/>
    <property type="molecule type" value="Genomic_DNA"/>
</dbReference>
<dbReference type="SMR" id="P0C9X0"/>
<dbReference type="Proteomes" id="UP000000859">
    <property type="component" value="Segment"/>
</dbReference>
<dbReference type="GO" id="GO:0020002">
    <property type="term" value="C:host cell plasma membrane"/>
    <property type="evidence" value="ECO:0007669"/>
    <property type="project" value="UniProtKB-SubCell"/>
</dbReference>
<dbReference type="GO" id="GO:0016020">
    <property type="term" value="C:membrane"/>
    <property type="evidence" value="ECO:0007669"/>
    <property type="project" value="UniProtKB-KW"/>
</dbReference>
<dbReference type="GO" id="GO:0055036">
    <property type="term" value="C:virion membrane"/>
    <property type="evidence" value="ECO:0007669"/>
    <property type="project" value="UniProtKB-SubCell"/>
</dbReference>
<organismHost>
    <name type="scientific">Ornithodoros</name>
    <name type="common">relapsing fever ticks</name>
    <dbReference type="NCBI Taxonomy" id="6937"/>
</organismHost>
<organismHost>
    <name type="scientific">Phacochoerus aethiopicus</name>
    <name type="common">Warthog</name>
    <dbReference type="NCBI Taxonomy" id="85517"/>
</organismHost>
<organismHost>
    <name type="scientific">Phacochoerus africanus</name>
    <name type="common">Warthog</name>
    <dbReference type="NCBI Taxonomy" id="41426"/>
</organismHost>
<organismHost>
    <name type="scientific">Potamochoerus larvatus</name>
    <name type="common">Bushpig</name>
    <dbReference type="NCBI Taxonomy" id="273792"/>
</organismHost>
<organismHost>
    <name type="scientific">Sus scrofa</name>
    <name type="common">Pig</name>
    <dbReference type="NCBI Taxonomy" id="9823"/>
</organismHost>
<comment type="subcellular location">
    <subcellularLocation>
        <location>Virion membrane</location>
        <topology>Single-pass membrane protein</topology>
    </subcellularLocation>
    <subcellularLocation>
        <location evidence="1">Host cell membrane</location>
        <topology evidence="1">Single-pass membrane protein</topology>
    </subcellularLocation>
</comment>
<comment type="induction">
    <text>Early structural protein.</text>
</comment>
<comment type="similarity">
    <text evidence="3">Belongs to the asfivirus envelope protein p22 family.</text>
</comment>
<organism>
    <name type="scientific">African swine fever virus (isolate Tick/South Africa/Pretoriuskop Pr4/1996)</name>
    <name type="common">ASFV</name>
    <dbReference type="NCBI Taxonomy" id="561443"/>
    <lineage>
        <taxon>Viruses</taxon>
        <taxon>Varidnaviria</taxon>
        <taxon>Bamfordvirae</taxon>
        <taxon>Nucleocytoviricota</taxon>
        <taxon>Pokkesviricetes</taxon>
        <taxon>Asfuvirales</taxon>
        <taxon>Asfarviridae</taxon>
        <taxon>Asfivirus</taxon>
        <taxon>African swine fever virus</taxon>
    </lineage>
</organism>
<sequence length="184" mass="20914">MKKYIKMYLVLLIAIILFITILVIFLISGLFYPEQNPLLPISPPKKKCKTDTDCKDKGHHCVGGFCTNMSCVEAAKYDIKDIKIDPNIRSCNYTPKFYKFSNTTADLQSPFGKSRIDYGWIYSPHSNEDSCQSFCANYPEGCIAWEYDQFSGTTTGECFLYTNPHPVLKYKNGATVMAIPRKVL</sequence>
<gene>
    <name type="ordered locus">Pret-169</name>
</gene>
<accession>P0C9X0</accession>
<name>EV169_ASFP4</name>